<protein>
    <recommendedName>
        <fullName evidence="1">Threonine--tRNA ligase</fullName>
        <ecNumber evidence="1">6.1.1.3</ecNumber>
    </recommendedName>
    <alternativeName>
        <fullName evidence="1">Threonyl-tRNA synthetase</fullName>
        <shortName evidence="1">ThrRS</shortName>
    </alternativeName>
</protein>
<accession>Q8Z6I2</accession>
<sequence>MPVITLPDGSQRHYDHPVSPMDVALDIGPGLAKATIAGRVNGELVDASDLIENDATLSIITAKDEEGLEIIRHSCAHLLGHAIKQLWPHTKMAIGPVVDNGFYYDVDLDRTLTQEDVEALEKRMHELAEKNYDVIKKKVSWHEARETFVKRGESYKVSILDENIAHDDKPGLYHHEEYVDMCRGPHVPNMRFCHHFKLMKTAGAYWRGDSNNKMLQRIYGTAWADKKALNAYLQRLEEAAKRDHRKIGKQLDLYHMQEEAPGMVFWHNDGWTIFRELEVFVRSKLKEYQYQEVKGPFMMDRVLWEKTGHWDNYKDAMFTTSSENREYCIKPMNCPGHVQIFNQGLKSYRDLPLRMAEFGSCHRNEPSGALHGLMRVRGFTQDDAHIFCTEEQIRDEVNACIRMVYDMYSTFGFEKIVVKLSTRPDKRIGSDEMWDRAEADLAVALEENNIPFEYQLGEGAFYGPKIEFTLYDCLDRAWQCGTVQLDFSLPSRLSASYVGEDNERKVPVMIHRAILGSMERFIGILTEEFAGFFPTWLAPVQVVVMNITDSQSEYVNELTQKLQNAGIRVKADLRNEKIGFKIREHTLRRVPYMLVCGDKEVEAGKVAVRTRRGKDLGSLDVNDVIEKLQQEIRSRSLQQLEE</sequence>
<comment type="function">
    <text evidence="1">Catalyzes the attachment of threonine to tRNA(Thr) in a two-step reaction: L-threonine is first activated by ATP to form Thr-AMP and then transferred to the acceptor end of tRNA(Thr). Also edits incorrectly charged L-seryl-tRNA(Thr).</text>
</comment>
<comment type="catalytic activity">
    <reaction evidence="1">
        <text>tRNA(Thr) + L-threonine + ATP = L-threonyl-tRNA(Thr) + AMP + diphosphate + H(+)</text>
        <dbReference type="Rhea" id="RHEA:24624"/>
        <dbReference type="Rhea" id="RHEA-COMP:9670"/>
        <dbReference type="Rhea" id="RHEA-COMP:9704"/>
        <dbReference type="ChEBI" id="CHEBI:15378"/>
        <dbReference type="ChEBI" id="CHEBI:30616"/>
        <dbReference type="ChEBI" id="CHEBI:33019"/>
        <dbReference type="ChEBI" id="CHEBI:57926"/>
        <dbReference type="ChEBI" id="CHEBI:78442"/>
        <dbReference type="ChEBI" id="CHEBI:78534"/>
        <dbReference type="ChEBI" id="CHEBI:456215"/>
        <dbReference type="EC" id="6.1.1.3"/>
    </reaction>
</comment>
<comment type="cofactor">
    <cofactor evidence="1">
        <name>Zn(2+)</name>
        <dbReference type="ChEBI" id="CHEBI:29105"/>
    </cofactor>
    <text evidence="1">Binds 1 zinc ion per subunit.</text>
</comment>
<comment type="subunit">
    <text evidence="1">Homodimer.</text>
</comment>
<comment type="subcellular location">
    <subcellularLocation>
        <location evidence="1">Cytoplasm</location>
    </subcellularLocation>
</comment>
<comment type="similarity">
    <text evidence="1">Belongs to the class-II aminoacyl-tRNA synthetase family.</text>
</comment>
<keyword id="KW-0030">Aminoacyl-tRNA synthetase</keyword>
<keyword id="KW-0067">ATP-binding</keyword>
<keyword id="KW-0963">Cytoplasm</keyword>
<keyword id="KW-0436">Ligase</keyword>
<keyword id="KW-0479">Metal-binding</keyword>
<keyword id="KW-0547">Nucleotide-binding</keyword>
<keyword id="KW-0648">Protein biosynthesis</keyword>
<keyword id="KW-0694">RNA-binding</keyword>
<keyword id="KW-0820">tRNA-binding</keyword>
<keyword id="KW-0862">Zinc</keyword>
<name>SYT_SALTI</name>
<evidence type="ECO:0000255" key="1">
    <source>
        <dbReference type="HAMAP-Rule" id="MF_00184"/>
    </source>
</evidence>
<evidence type="ECO:0000255" key="2">
    <source>
        <dbReference type="PROSITE-ProRule" id="PRU01228"/>
    </source>
</evidence>
<reference key="1">
    <citation type="journal article" date="2001" name="Nature">
        <title>Complete genome sequence of a multiple drug resistant Salmonella enterica serovar Typhi CT18.</title>
        <authorList>
            <person name="Parkhill J."/>
            <person name="Dougan G."/>
            <person name="James K.D."/>
            <person name="Thomson N.R."/>
            <person name="Pickard D."/>
            <person name="Wain J."/>
            <person name="Churcher C.M."/>
            <person name="Mungall K.L."/>
            <person name="Bentley S.D."/>
            <person name="Holden M.T.G."/>
            <person name="Sebaihia M."/>
            <person name="Baker S."/>
            <person name="Basham D."/>
            <person name="Brooks K."/>
            <person name="Chillingworth T."/>
            <person name="Connerton P."/>
            <person name="Cronin A."/>
            <person name="Davis P."/>
            <person name="Davies R.M."/>
            <person name="Dowd L."/>
            <person name="White N."/>
            <person name="Farrar J."/>
            <person name="Feltwell T."/>
            <person name="Hamlin N."/>
            <person name="Haque A."/>
            <person name="Hien T.T."/>
            <person name="Holroyd S."/>
            <person name="Jagels K."/>
            <person name="Krogh A."/>
            <person name="Larsen T.S."/>
            <person name="Leather S."/>
            <person name="Moule S."/>
            <person name="O'Gaora P."/>
            <person name="Parry C."/>
            <person name="Quail M.A."/>
            <person name="Rutherford K.M."/>
            <person name="Simmonds M."/>
            <person name="Skelton J."/>
            <person name="Stevens K."/>
            <person name="Whitehead S."/>
            <person name="Barrell B.G."/>
        </authorList>
    </citation>
    <scope>NUCLEOTIDE SEQUENCE [LARGE SCALE GENOMIC DNA]</scope>
    <source>
        <strain>CT18</strain>
    </source>
</reference>
<reference key="2">
    <citation type="journal article" date="2003" name="J. Bacteriol.">
        <title>Comparative genomics of Salmonella enterica serovar Typhi strains Ty2 and CT18.</title>
        <authorList>
            <person name="Deng W."/>
            <person name="Liou S.-R."/>
            <person name="Plunkett G. III"/>
            <person name="Mayhew G.F."/>
            <person name="Rose D.J."/>
            <person name="Burland V."/>
            <person name="Kodoyianni V."/>
            <person name="Schwartz D.C."/>
            <person name="Blattner F.R."/>
        </authorList>
    </citation>
    <scope>NUCLEOTIDE SEQUENCE [LARGE SCALE GENOMIC DNA]</scope>
    <source>
        <strain>ATCC 700931 / Ty2</strain>
    </source>
</reference>
<dbReference type="EC" id="6.1.1.3" evidence="1"/>
<dbReference type="EMBL" id="AL513382">
    <property type="protein sequence ID" value="CAD02020.1"/>
    <property type="molecule type" value="Genomic_DNA"/>
</dbReference>
<dbReference type="EMBL" id="AE014613">
    <property type="protein sequence ID" value="AAO68868.1"/>
    <property type="molecule type" value="Genomic_DNA"/>
</dbReference>
<dbReference type="RefSeq" id="NP_456179.1">
    <property type="nucleotide sequence ID" value="NC_003198.1"/>
</dbReference>
<dbReference type="RefSeq" id="WP_001144226.1">
    <property type="nucleotide sequence ID" value="NZ_WSUR01000011.1"/>
</dbReference>
<dbReference type="SMR" id="Q8Z6I2"/>
<dbReference type="STRING" id="220341.gene:17585712"/>
<dbReference type="KEGG" id="stt:t1213"/>
<dbReference type="KEGG" id="sty:STY1778"/>
<dbReference type="PATRIC" id="fig|220341.7.peg.1789"/>
<dbReference type="eggNOG" id="COG0441">
    <property type="taxonomic scope" value="Bacteria"/>
</dbReference>
<dbReference type="HOGENOM" id="CLU_008554_0_1_6"/>
<dbReference type="OMA" id="WYADGMY"/>
<dbReference type="OrthoDB" id="9802304at2"/>
<dbReference type="Proteomes" id="UP000000541">
    <property type="component" value="Chromosome"/>
</dbReference>
<dbReference type="Proteomes" id="UP000002670">
    <property type="component" value="Chromosome"/>
</dbReference>
<dbReference type="GO" id="GO:0005829">
    <property type="term" value="C:cytosol"/>
    <property type="evidence" value="ECO:0007669"/>
    <property type="project" value="TreeGrafter"/>
</dbReference>
<dbReference type="GO" id="GO:0005524">
    <property type="term" value="F:ATP binding"/>
    <property type="evidence" value="ECO:0007669"/>
    <property type="project" value="UniProtKB-UniRule"/>
</dbReference>
<dbReference type="GO" id="GO:0046872">
    <property type="term" value="F:metal ion binding"/>
    <property type="evidence" value="ECO:0007669"/>
    <property type="project" value="UniProtKB-KW"/>
</dbReference>
<dbReference type="GO" id="GO:0004829">
    <property type="term" value="F:threonine-tRNA ligase activity"/>
    <property type="evidence" value="ECO:0007669"/>
    <property type="project" value="UniProtKB-UniRule"/>
</dbReference>
<dbReference type="GO" id="GO:0000049">
    <property type="term" value="F:tRNA binding"/>
    <property type="evidence" value="ECO:0007669"/>
    <property type="project" value="UniProtKB-KW"/>
</dbReference>
<dbReference type="GO" id="GO:0006435">
    <property type="term" value="P:threonyl-tRNA aminoacylation"/>
    <property type="evidence" value="ECO:0007669"/>
    <property type="project" value="UniProtKB-UniRule"/>
</dbReference>
<dbReference type="CDD" id="cd01667">
    <property type="entry name" value="TGS_ThrRS"/>
    <property type="match status" value="1"/>
</dbReference>
<dbReference type="CDD" id="cd00860">
    <property type="entry name" value="ThrRS_anticodon"/>
    <property type="match status" value="1"/>
</dbReference>
<dbReference type="CDD" id="cd00771">
    <property type="entry name" value="ThrRS_core"/>
    <property type="match status" value="1"/>
</dbReference>
<dbReference type="FunFam" id="3.10.20.30:FF:000005">
    <property type="entry name" value="Threonine--tRNA ligase"/>
    <property type="match status" value="1"/>
</dbReference>
<dbReference type="FunFam" id="3.30.54.20:FF:000002">
    <property type="entry name" value="Threonine--tRNA ligase"/>
    <property type="match status" value="1"/>
</dbReference>
<dbReference type="FunFam" id="3.30.930.10:FF:000002">
    <property type="entry name" value="Threonine--tRNA ligase"/>
    <property type="match status" value="1"/>
</dbReference>
<dbReference type="FunFam" id="3.40.50.800:FF:000001">
    <property type="entry name" value="Threonine--tRNA ligase"/>
    <property type="match status" value="1"/>
</dbReference>
<dbReference type="FunFam" id="3.30.980.10:FF:000005">
    <property type="entry name" value="Threonyl-tRNA synthetase, mitochondrial"/>
    <property type="match status" value="1"/>
</dbReference>
<dbReference type="Gene3D" id="3.10.20.30">
    <property type="match status" value="1"/>
</dbReference>
<dbReference type="Gene3D" id="3.30.54.20">
    <property type="match status" value="1"/>
</dbReference>
<dbReference type="Gene3D" id="3.40.50.800">
    <property type="entry name" value="Anticodon-binding domain"/>
    <property type="match status" value="1"/>
</dbReference>
<dbReference type="Gene3D" id="3.30.930.10">
    <property type="entry name" value="Bira Bifunctional Protein, Domain 2"/>
    <property type="match status" value="1"/>
</dbReference>
<dbReference type="Gene3D" id="3.30.980.10">
    <property type="entry name" value="Threonyl-trna Synthetase, Chain A, domain 2"/>
    <property type="match status" value="1"/>
</dbReference>
<dbReference type="HAMAP" id="MF_00184">
    <property type="entry name" value="Thr_tRNA_synth"/>
    <property type="match status" value="1"/>
</dbReference>
<dbReference type="InterPro" id="IPR002314">
    <property type="entry name" value="aa-tRNA-synt_IIb"/>
</dbReference>
<dbReference type="InterPro" id="IPR006195">
    <property type="entry name" value="aa-tRNA-synth_II"/>
</dbReference>
<dbReference type="InterPro" id="IPR045864">
    <property type="entry name" value="aa-tRNA-synth_II/BPL/LPL"/>
</dbReference>
<dbReference type="InterPro" id="IPR004154">
    <property type="entry name" value="Anticodon-bd"/>
</dbReference>
<dbReference type="InterPro" id="IPR036621">
    <property type="entry name" value="Anticodon-bd_dom_sf"/>
</dbReference>
<dbReference type="InterPro" id="IPR012675">
    <property type="entry name" value="Beta-grasp_dom_sf"/>
</dbReference>
<dbReference type="InterPro" id="IPR004095">
    <property type="entry name" value="TGS"/>
</dbReference>
<dbReference type="InterPro" id="IPR012676">
    <property type="entry name" value="TGS-like"/>
</dbReference>
<dbReference type="InterPro" id="IPR002320">
    <property type="entry name" value="Thr-tRNA-ligase_IIa"/>
</dbReference>
<dbReference type="InterPro" id="IPR018163">
    <property type="entry name" value="Thr/Ala-tRNA-synth_IIc_edit"/>
</dbReference>
<dbReference type="InterPro" id="IPR047246">
    <property type="entry name" value="ThrRS_anticodon"/>
</dbReference>
<dbReference type="InterPro" id="IPR033728">
    <property type="entry name" value="ThrRS_core"/>
</dbReference>
<dbReference type="InterPro" id="IPR012947">
    <property type="entry name" value="tRNA_SAD"/>
</dbReference>
<dbReference type="NCBIfam" id="TIGR00418">
    <property type="entry name" value="thrS"/>
    <property type="match status" value="1"/>
</dbReference>
<dbReference type="PANTHER" id="PTHR11451:SF44">
    <property type="entry name" value="THREONINE--TRNA LIGASE, CHLOROPLASTIC_MITOCHONDRIAL 2"/>
    <property type="match status" value="1"/>
</dbReference>
<dbReference type="PANTHER" id="PTHR11451">
    <property type="entry name" value="THREONINE-TRNA LIGASE"/>
    <property type="match status" value="1"/>
</dbReference>
<dbReference type="Pfam" id="PF03129">
    <property type="entry name" value="HGTP_anticodon"/>
    <property type="match status" value="1"/>
</dbReference>
<dbReference type="Pfam" id="PF02824">
    <property type="entry name" value="TGS"/>
    <property type="match status" value="1"/>
</dbReference>
<dbReference type="Pfam" id="PF00587">
    <property type="entry name" value="tRNA-synt_2b"/>
    <property type="match status" value="1"/>
</dbReference>
<dbReference type="Pfam" id="PF07973">
    <property type="entry name" value="tRNA_SAD"/>
    <property type="match status" value="1"/>
</dbReference>
<dbReference type="PRINTS" id="PR01047">
    <property type="entry name" value="TRNASYNTHTHR"/>
</dbReference>
<dbReference type="SMART" id="SM00863">
    <property type="entry name" value="tRNA_SAD"/>
    <property type="match status" value="1"/>
</dbReference>
<dbReference type="SUPFAM" id="SSF52954">
    <property type="entry name" value="Class II aaRS ABD-related"/>
    <property type="match status" value="1"/>
</dbReference>
<dbReference type="SUPFAM" id="SSF55681">
    <property type="entry name" value="Class II aaRS and biotin synthetases"/>
    <property type="match status" value="1"/>
</dbReference>
<dbReference type="SUPFAM" id="SSF81271">
    <property type="entry name" value="TGS-like"/>
    <property type="match status" value="1"/>
</dbReference>
<dbReference type="SUPFAM" id="SSF55186">
    <property type="entry name" value="ThrRS/AlaRS common domain"/>
    <property type="match status" value="1"/>
</dbReference>
<dbReference type="PROSITE" id="PS50862">
    <property type="entry name" value="AA_TRNA_LIGASE_II"/>
    <property type="match status" value="1"/>
</dbReference>
<dbReference type="PROSITE" id="PS51880">
    <property type="entry name" value="TGS"/>
    <property type="match status" value="1"/>
</dbReference>
<gene>
    <name evidence="1" type="primary">thrS</name>
    <name type="ordered locus">STY1778</name>
    <name type="ordered locus">t1213</name>
</gene>
<feature type="chain" id="PRO_0000101042" description="Threonine--tRNA ligase">
    <location>
        <begin position="1"/>
        <end position="642"/>
    </location>
</feature>
<feature type="domain" description="TGS" evidence="2">
    <location>
        <begin position="1"/>
        <end position="61"/>
    </location>
</feature>
<feature type="region of interest" description="Catalytic" evidence="1">
    <location>
        <begin position="243"/>
        <end position="534"/>
    </location>
</feature>
<feature type="binding site" evidence="1">
    <location>
        <position position="334"/>
    </location>
    <ligand>
        <name>Zn(2+)</name>
        <dbReference type="ChEBI" id="CHEBI:29105"/>
    </ligand>
</feature>
<feature type="binding site" evidence="1">
    <location>
        <position position="385"/>
    </location>
    <ligand>
        <name>Zn(2+)</name>
        <dbReference type="ChEBI" id="CHEBI:29105"/>
    </ligand>
</feature>
<feature type="binding site" evidence="1">
    <location>
        <position position="511"/>
    </location>
    <ligand>
        <name>Zn(2+)</name>
        <dbReference type="ChEBI" id="CHEBI:29105"/>
    </ligand>
</feature>
<proteinExistence type="inferred from homology"/>
<organism>
    <name type="scientific">Salmonella typhi</name>
    <dbReference type="NCBI Taxonomy" id="90370"/>
    <lineage>
        <taxon>Bacteria</taxon>
        <taxon>Pseudomonadati</taxon>
        <taxon>Pseudomonadota</taxon>
        <taxon>Gammaproteobacteria</taxon>
        <taxon>Enterobacterales</taxon>
        <taxon>Enterobacteriaceae</taxon>
        <taxon>Salmonella</taxon>
    </lineage>
</organism>